<feature type="chain" id="PRO_0000059163" description="Putative polypeptide N-acetylgalactosaminyltransferase 9">
    <location>
        <begin position="1"/>
        <end position="650"/>
    </location>
</feature>
<feature type="topological domain" description="Cytoplasmic" evidence="1">
    <location>
        <begin position="1"/>
        <end position="11"/>
    </location>
</feature>
<feature type="transmembrane region" description="Helical; Signal-anchor for type II membrane protein" evidence="1">
    <location>
        <begin position="12"/>
        <end position="31"/>
    </location>
</feature>
<feature type="topological domain" description="Lumenal" evidence="1">
    <location>
        <begin position="32"/>
        <end position="650"/>
    </location>
</feature>
<feature type="domain" description="Ricin B-type lectin" evidence="2">
    <location>
        <begin position="521"/>
        <end position="643"/>
    </location>
</feature>
<feature type="region of interest" description="Disordered" evidence="3">
    <location>
        <begin position="84"/>
        <end position="154"/>
    </location>
</feature>
<feature type="region of interest" description="Catalytic subdomain A" evidence="9">
    <location>
        <begin position="208"/>
        <end position="317"/>
    </location>
</feature>
<feature type="region of interest" description="Catalytic subdomain B" evidence="9">
    <location>
        <begin position="378"/>
        <end position="440"/>
    </location>
</feature>
<feature type="compositionally biased region" description="Basic and acidic residues" evidence="3">
    <location>
        <begin position="107"/>
        <end position="136"/>
    </location>
</feature>
<feature type="binding site" evidence="6 11">
    <location>
        <position position="216"/>
    </location>
    <ligand>
        <name>substrate</name>
    </ligand>
</feature>
<feature type="binding site" evidence="6 11">
    <location>
        <position position="249"/>
    </location>
    <ligand>
        <name>substrate</name>
    </ligand>
</feature>
<feature type="binding site" evidence="6 11">
    <location>
        <position position="278"/>
    </location>
    <ligand>
        <name>substrate</name>
    </ligand>
</feature>
<feature type="binding site" evidence="6 11">
    <location>
        <position position="301"/>
    </location>
    <ligand>
        <name>Mn(2+)</name>
        <dbReference type="ChEBI" id="CHEBI:29035"/>
    </ligand>
</feature>
<feature type="binding site" evidence="6 11">
    <location>
        <position position="302"/>
    </location>
    <ligand>
        <name>substrate</name>
    </ligand>
</feature>
<feature type="binding site" evidence="6 11">
    <location>
        <position position="303"/>
    </location>
    <ligand>
        <name>Mn(2+)</name>
        <dbReference type="ChEBI" id="CHEBI:29035"/>
    </ligand>
</feature>
<feature type="binding site" evidence="6 11">
    <location>
        <position position="303"/>
    </location>
    <ligand>
        <name>substrate</name>
    </ligand>
</feature>
<feature type="binding site" evidence="6 11">
    <location>
        <position position="437"/>
    </location>
    <ligand>
        <name>Mn(2+)</name>
        <dbReference type="ChEBI" id="CHEBI:29035"/>
    </ligand>
</feature>
<feature type="binding site" evidence="6 11">
    <location>
        <position position="440"/>
    </location>
    <ligand>
        <name>substrate</name>
    </ligand>
</feature>
<feature type="binding site" evidence="6 11">
    <location>
        <position position="445"/>
    </location>
    <ligand>
        <name>substrate</name>
    </ligand>
</feature>
<feature type="glycosylation site" description="N-linked (GlcNAc...) asparagine" evidence="6 13">
    <location>
        <position position="321"/>
    </location>
</feature>
<feature type="glycosylation site" description="N-linked (GlcNAc...) asparagine" evidence="1">
    <location>
        <position position="373"/>
    </location>
</feature>
<feature type="disulfide bond" evidence="2 6 11">
    <location>
        <begin position="198"/>
        <end position="432"/>
    </location>
</feature>
<feature type="disulfide bond" evidence="2 6 11">
    <location>
        <begin position="423"/>
        <end position="499"/>
    </location>
</feature>
<feature type="disulfide bond" evidence="2 6 11">
    <location>
        <begin position="535"/>
        <end position="554"/>
    </location>
</feature>
<feature type="disulfide bond" evidence="2 6 11">
    <location>
        <begin position="577"/>
        <end position="590"/>
    </location>
</feature>
<feature type="disulfide bond" evidence="2 6 11">
    <location>
        <begin position="616"/>
        <end position="631"/>
    </location>
</feature>
<feature type="splice variant" id="VSP_034632" description="In isoform E." evidence="8">
    <location>
        <begin position="1"/>
        <end position="383"/>
    </location>
</feature>
<feature type="splice variant" id="VSP_034633" description="In isoform F." evidence="7">
    <original>AFIWRRRSTTIVKLVAFALAI</original>
    <variation>NFYLSSWHCQVTQSGLVAGLE</variation>
    <location>
        <begin position="2"/>
        <end position="22"/>
    </location>
</feature>
<feature type="splice variant" id="VSP_034634" description="In isoform F." evidence="7">
    <location>
        <begin position="23"/>
        <end position="273"/>
    </location>
</feature>
<feature type="splice variant" id="VSP_034635" description="In isoform B, isoform E and isoform F." evidence="7">
    <original>RNLGYGGRTCLDAPAGKKHQKKAVGTYPCHR</original>
    <variation>ANVPNGMCLDAKEKSEEETPVSIYECHG</variation>
    <location>
        <begin position="526"/>
        <end position="556"/>
    </location>
</feature>
<feature type="mutagenesis site" description="Results in secretory granule defects including an angular and shard-like morphology." evidence="6">
    <location>
        <begin position="254"/>
        <end position="650"/>
    </location>
</feature>
<feature type="sequence conflict" description="In Ref. 3; AAM51988." evidence="8" ref="3">
    <original>N</original>
    <variation>D</variation>
    <location>
        <position position="145"/>
    </location>
</feature>
<feature type="sequence conflict" description="In Ref. 3; AAM51988." evidence="8" ref="3">
    <original>L</original>
    <variation>P</variation>
    <location>
        <position position="454"/>
    </location>
</feature>
<feature type="sequence conflict" description="In Ref. 3; AAM51988." evidence="8" ref="3">
    <original>Y</original>
    <variation>C</variation>
    <location>
        <position position="472"/>
    </location>
</feature>
<feature type="helix" evidence="15">
    <location>
        <begin position="148"/>
        <end position="150"/>
    </location>
</feature>
<feature type="helix" evidence="15">
    <location>
        <begin position="161"/>
        <end position="174"/>
    </location>
</feature>
<feature type="helix" evidence="15">
    <location>
        <begin position="178"/>
        <end position="183"/>
    </location>
</feature>
<feature type="helix" evidence="15">
    <location>
        <begin position="196"/>
        <end position="200"/>
    </location>
</feature>
<feature type="strand" evidence="15">
    <location>
        <begin position="211"/>
        <end position="219"/>
    </location>
</feature>
<feature type="helix" evidence="15">
    <location>
        <begin position="222"/>
        <end position="235"/>
    </location>
</feature>
<feature type="helix" evidence="15">
    <location>
        <begin position="238"/>
        <end position="240"/>
    </location>
</feature>
<feature type="strand" evidence="15">
    <location>
        <begin position="241"/>
        <end position="248"/>
    </location>
</feature>
<feature type="helix" evidence="15">
    <location>
        <begin position="254"/>
        <end position="256"/>
    </location>
</feature>
<feature type="helix" evidence="15">
    <location>
        <begin position="258"/>
        <end position="263"/>
    </location>
</feature>
<feature type="helix" evidence="15">
    <location>
        <begin position="264"/>
        <end position="266"/>
    </location>
</feature>
<feature type="strand" evidence="15">
    <location>
        <begin position="270"/>
        <end position="274"/>
    </location>
</feature>
<feature type="helix" evidence="15">
    <location>
        <begin position="281"/>
        <end position="291"/>
    </location>
</feature>
<feature type="strand" evidence="15">
    <location>
        <begin position="294"/>
        <end position="301"/>
    </location>
</feature>
<feature type="strand" evidence="15">
    <location>
        <begin position="304"/>
        <end position="306"/>
    </location>
</feature>
<feature type="helix" evidence="15">
    <location>
        <begin position="311"/>
        <end position="320"/>
    </location>
</feature>
<feature type="strand" evidence="15">
    <location>
        <begin position="324"/>
        <end position="334"/>
    </location>
</feature>
<feature type="turn" evidence="15">
    <location>
        <begin position="335"/>
        <end position="337"/>
    </location>
</feature>
<feature type="helix" evidence="15">
    <location>
        <begin position="345"/>
        <end position="347"/>
    </location>
</feature>
<feature type="strand" evidence="15">
    <location>
        <begin position="349"/>
        <end position="353"/>
    </location>
</feature>
<feature type="turn" evidence="14">
    <location>
        <begin position="355"/>
        <end position="357"/>
    </location>
</feature>
<feature type="strand" evidence="15">
    <location>
        <begin position="359"/>
        <end position="363"/>
    </location>
</feature>
<feature type="helix" evidence="15">
    <location>
        <begin position="366"/>
        <end position="369"/>
    </location>
</feature>
<feature type="strand" evidence="15">
    <location>
        <begin position="386"/>
        <end position="392"/>
    </location>
</feature>
<feature type="helix" evidence="15">
    <location>
        <begin position="393"/>
        <end position="398"/>
    </location>
</feature>
<feature type="helix" evidence="15">
    <location>
        <begin position="412"/>
        <end position="422"/>
    </location>
</feature>
<feature type="strand" evidence="15">
    <location>
        <begin position="426"/>
        <end position="439"/>
    </location>
</feature>
<feature type="helix" evidence="15">
    <location>
        <begin position="445"/>
        <end position="448"/>
    </location>
</feature>
<feature type="helix" evidence="15">
    <location>
        <begin position="455"/>
        <end position="465"/>
    </location>
</feature>
<feature type="helix" evidence="15">
    <location>
        <begin position="467"/>
        <end position="469"/>
    </location>
</feature>
<feature type="helix" evidence="15">
    <location>
        <begin position="470"/>
        <end position="476"/>
    </location>
</feature>
<feature type="turn" evidence="15">
    <location>
        <begin position="477"/>
        <end position="479"/>
    </location>
</feature>
<feature type="helix" evidence="15">
    <location>
        <begin position="488"/>
        <end position="496"/>
    </location>
</feature>
<feature type="helix" evidence="15">
    <location>
        <begin position="502"/>
        <end position="508"/>
    </location>
</feature>
<feature type="helix" evidence="15">
    <location>
        <begin position="516"/>
        <end position="518"/>
    </location>
</feature>
<feature type="strand" evidence="15">
    <location>
        <begin position="519"/>
        <end position="523"/>
    </location>
</feature>
<feature type="strand" evidence="15">
    <location>
        <begin position="525"/>
        <end position="527"/>
    </location>
</feature>
<feature type="strand" evidence="15">
    <location>
        <begin position="534"/>
        <end position="538"/>
    </location>
</feature>
<feature type="strand" evidence="14">
    <location>
        <begin position="541"/>
        <end position="544"/>
    </location>
</feature>
<feature type="strand" evidence="15">
    <location>
        <begin position="547"/>
        <end position="553"/>
    </location>
</feature>
<feature type="helix" evidence="15">
    <location>
        <begin position="559"/>
        <end position="561"/>
    </location>
</feature>
<feature type="strand" evidence="15">
    <location>
        <begin position="563"/>
        <end position="565"/>
    </location>
</feature>
<feature type="strand" evidence="15">
    <location>
        <begin position="571"/>
        <end position="573"/>
    </location>
</feature>
<feature type="strand" evidence="15">
    <location>
        <begin position="576"/>
        <end position="583"/>
    </location>
</feature>
<feature type="strand" evidence="15">
    <location>
        <begin position="585"/>
        <end position="589"/>
    </location>
</feature>
<feature type="helix" evidence="15">
    <location>
        <begin position="595"/>
        <end position="597"/>
    </location>
</feature>
<feature type="strand" evidence="15">
    <location>
        <begin position="599"/>
        <end position="602"/>
    </location>
</feature>
<feature type="turn" evidence="15">
    <location>
        <begin position="603"/>
        <end position="606"/>
    </location>
</feature>
<feature type="strand" evidence="15">
    <location>
        <begin position="607"/>
        <end position="610"/>
    </location>
</feature>
<feature type="turn" evidence="15">
    <location>
        <begin position="611"/>
        <end position="613"/>
    </location>
</feature>
<feature type="strand" evidence="15">
    <location>
        <begin position="616"/>
        <end position="619"/>
    </location>
</feature>
<feature type="strand" evidence="15">
    <location>
        <begin position="626"/>
        <end position="629"/>
    </location>
</feature>
<feature type="helix" evidence="15">
    <location>
        <begin position="636"/>
        <end position="638"/>
    </location>
</feature>
<feature type="strand" evidence="15">
    <location>
        <begin position="640"/>
        <end position="642"/>
    </location>
</feature>
<feature type="helix" evidence="15">
    <location>
        <begin position="647"/>
        <end position="649"/>
    </location>
</feature>
<organism>
    <name type="scientific">Drosophila melanogaster</name>
    <name type="common">Fruit fly</name>
    <dbReference type="NCBI Taxonomy" id="7227"/>
    <lineage>
        <taxon>Eukaryota</taxon>
        <taxon>Metazoa</taxon>
        <taxon>Ecdysozoa</taxon>
        <taxon>Arthropoda</taxon>
        <taxon>Hexapoda</taxon>
        <taxon>Insecta</taxon>
        <taxon>Pterygota</taxon>
        <taxon>Neoptera</taxon>
        <taxon>Endopterygota</taxon>
        <taxon>Diptera</taxon>
        <taxon>Brachycera</taxon>
        <taxon>Muscomorpha</taxon>
        <taxon>Ephydroidea</taxon>
        <taxon>Drosophilidae</taxon>
        <taxon>Drosophila</taxon>
        <taxon>Sophophora</taxon>
    </lineage>
</organism>
<gene>
    <name evidence="10" type="primary">Pgant9</name>
    <name evidence="10" type="ORF">CG30463</name>
</gene>
<name>GALT9_DROME</name>
<reference key="1">
    <citation type="journal article" date="2000" name="Science">
        <title>The genome sequence of Drosophila melanogaster.</title>
        <authorList>
            <person name="Adams M.D."/>
            <person name="Celniker S.E."/>
            <person name="Holt R.A."/>
            <person name="Evans C.A."/>
            <person name="Gocayne J.D."/>
            <person name="Amanatides P.G."/>
            <person name="Scherer S.E."/>
            <person name="Li P.W."/>
            <person name="Hoskins R.A."/>
            <person name="Galle R.F."/>
            <person name="George R.A."/>
            <person name="Lewis S.E."/>
            <person name="Richards S."/>
            <person name="Ashburner M."/>
            <person name="Henderson S.N."/>
            <person name="Sutton G.G."/>
            <person name="Wortman J.R."/>
            <person name="Yandell M.D."/>
            <person name="Zhang Q."/>
            <person name="Chen L.X."/>
            <person name="Brandon R.C."/>
            <person name="Rogers Y.-H.C."/>
            <person name="Blazej R.G."/>
            <person name="Champe M."/>
            <person name="Pfeiffer B.D."/>
            <person name="Wan K.H."/>
            <person name="Doyle C."/>
            <person name="Baxter E.G."/>
            <person name="Helt G."/>
            <person name="Nelson C.R."/>
            <person name="Miklos G.L.G."/>
            <person name="Abril J.F."/>
            <person name="Agbayani A."/>
            <person name="An H.-J."/>
            <person name="Andrews-Pfannkoch C."/>
            <person name="Baldwin D."/>
            <person name="Ballew R.M."/>
            <person name="Basu A."/>
            <person name="Baxendale J."/>
            <person name="Bayraktaroglu L."/>
            <person name="Beasley E.M."/>
            <person name="Beeson K.Y."/>
            <person name="Benos P.V."/>
            <person name="Berman B.P."/>
            <person name="Bhandari D."/>
            <person name="Bolshakov S."/>
            <person name="Borkova D."/>
            <person name="Botchan M.R."/>
            <person name="Bouck J."/>
            <person name="Brokstein P."/>
            <person name="Brottier P."/>
            <person name="Burtis K.C."/>
            <person name="Busam D.A."/>
            <person name="Butler H."/>
            <person name="Cadieu E."/>
            <person name="Center A."/>
            <person name="Chandra I."/>
            <person name="Cherry J.M."/>
            <person name="Cawley S."/>
            <person name="Dahlke C."/>
            <person name="Davenport L.B."/>
            <person name="Davies P."/>
            <person name="de Pablos B."/>
            <person name="Delcher A."/>
            <person name="Deng Z."/>
            <person name="Mays A.D."/>
            <person name="Dew I."/>
            <person name="Dietz S.M."/>
            <person name="Dodson K."/>
            <person name="Doup L.E."/>
            <person name="Downes M."/>
            <person name="Dugan-Rocha S."/>
            <person name="Dunkov B.C."/>
            <person name="Dunn P."/>
            <person name="Durbin K.J."/>
            <person name="Evangelista C.C."/>
            <person name="Ferraz C."/>
            <person name="Ferriera S."/>
            <person name="Fleischmann W."/>
            <person name="Fosler C."/>
            <person name="Gabrielian A.E."/>
            <person name="Garg N.S."/>
            <person name="Gelbart W.M."/>
            <person name="Glasser K."/>
            <person name="Glodek A."/>
            <person name="Gong F."/>
            <person name="Gorrell J.H."/>
            <person name="Gu Z."/>
            <person name="Guan P."/>
            <person name="Harris M."/>
            <person name="Harris N.L."/>
            <person name="Harvey D.A."/>
            <person name="Heiman T.J."/>
            <person name="Hernandez J.R."/>
            <person name="Houck J."/>
            <person name="Hostin D."/>
            <person name="Houston K.A."/>
            <person name="Howland T.J."/>
            <person name="Wei M.-H."/>
            <person name="Ibegwam C."/>
            <person name="Jalali M."/>
            <person name="Kalush F."/>
            <person name="Karpen G.H."/>
            <person name="Ke Z."/>
            <person name="Kennison J.A."/>
            <person name="Ketchum K.A."/>
            <person name="Kimmel B.E."/>
            <person name="Kodira C.D."/>
            <person name="Kraft C.L."/>
            <person name="Kravitz S."/>
            <person name="Kulp D."/>
            <person name="Lai Z."/>
            <person name="Lasko P."/>
            <person name="Lei Y."/>
            <person name="Levitsky A.A."/>
            <person name="Li J.H."/>
            <person name="Li Z."/>
            <person name="Liang Y."/>
            <person name="Lin X."/>
            <person name="Liu X."/>
            <person name="Mattei B."/>
            <person name="McIntosh T.C."/>
            <person name="McLeod M.P."/>
            <person name="McPherson D."/>
            <person name="Merkulov G."/>
            <person name="Milshina N.V."/>
            <person name="Mobarry C."/>
            <person name="Morris J."/>
            <person name="Moshrefi A."/>
            <person name="Mount S.M."/>
            <person name="Moy M."/>
            <person name="Murphy B."/>
            <person name="Murphy L."/>
            <person name="Muzny D.M."/>
            <person name="Nelson D.L."/>
            <person name="Nelson D.R."/>
            <person name="Nelson K.A."/>
            <person name="Nixon K."/>
            <person name="Nusskern D.R."/>
            <person name="Pacleb J.M."/>
            <person name="Palazzolo M."/>
            <person name="Pittman G.S."/>
            <person name="Pan S."/>
            <person name="Pollard J."/>
            <person name="Puri V."/>
            <person name="Reese M.G."/>
            <person name="Reinert K."/>
            <person name="Remington K."/>
            <person name="Saunders R.D.C."/>
            <person name="Scheeler F."/>
            <person name="Shen H."/>
            <person name="Shue B.C."/>
            <person name="Siden-Kiamos I."/>
            <person name="Simpson M."/>
            <person name="Skupski M.P."/>
            <person name="Smith T.J."/>
            <person name="Spier E."/>
            <person name="Spradling A.C."/>
            <person name="Stapleton M."/>
            <person name="Strong R."/>
            <person name="Sun E."/>
            <person name="Svirskas R."/>
            <person name="Tector C."/>
            <person name="Turner R."/>
            <person name="Venter E."/>
            <person name="Wang A.H."/>
            <person name="Wang X."/>
            <person name="Wang Z.-Y."/>
            <person name="Wassarman D.A."/>
            <person name="Weinstock G.M."/>
            <person name="Weissenbach J."/>
            <person name="Williams S.M."/>
            <person name="Woodage T."/>
            <person name="Worley K.C."/>
            <person name="Wu D."/>
            <person name="Yang S."/>
            <person name="Yao Q.A."/>
            <person name="Ye J."/>
            <person name="Yeh R.-F."/>
            <person name="Zaveri J.S."/>
            <person name="Zhan M."/>
            <person name="Zhang G."/>
            <person name="Zhao Q."/>
            <person name="Zheng L."/>
            <person name="Zheng X.H."/>
            <person name="Zhong F.N."/>
            <person name="Zhong W."/>
            <person name="Zhou X."/>
            <person name="Zhu S.C."/>
            <person name="Zhu X."/>
            <person name="Smith H.O."/>
            <person name="Gibbs R.A."/>
            <person name="Myers E.W."/>
            <person name="Rubin G.M."/>
            <person name="Venter J.C."/>
        </authorList>
    </citation>
    <scope>NUCLEOTIDE SEQUENCE [LARGE SCALE GENOMIC DNA]</scope>
    <source>
        <strain>Berkeley</strain>
    </source>
</reference>
<reference key="2">
    <citation type="journal article" date="2002" name="Genome Biol.">
        <title>Annotation of the Drosophila melanogaster euchromatic genome: a systematic review.</title>
        <authorList>
            <person name="Misra S."/>
            <person name="Crosby M.A."/>
            <person name="Mungall C.J."/>
            <person name="Matthews B.B."/>
            <person name="Campbell K.S."/>
            <person name="Hradecky P."/>
            <person name="Huang Y."/>
            <person name="Kaminker J.S."/>
            <person name="Millburn G.H."/>
            <person name="Prochnik S.E."/>
            <person name="Smith C.D."/>
            <person name="Tupy J.L."/>
            <person name="Whitfield E.J."/>
            <person name="Bayraktaroglu L."/>
            <person name="Berman B.P."/>
            <person name="Bettencourt B.R."/>
            <person name="Celniker S.E."/>
            <person name="de Grey A.D.N.J."/>
            <person name="Drysdale R.A."/>
            <person name="Harris N.L."/>
            <person name="Richter J."/>
            <person name="Russo S."/>
            <person name="Schroeder A.J."/>
            <person name="Shu S.Q."/>
            <person name="Stapleton M."/>
            <person name="Yamada C."/>
            <person name="Ashburner M."/>
            <person name="Gelbart W.M."/>
            <person name="Rubin G.M."/>
            <person name="Lewis S.E."/>
        </authorList>
    </citation>
    <scope>GENOME REANNOTATION</scope>
    <scope>ALTERNATIVE SPLICING</scope>
    <source>
        <strain>Berkeley</strain>
    </source>
</reference>
<reference key="3">
    <citation type="journal article" date="2002" name="Genome Biol.">
        <title>A Drosophila full-length cDNA resource.</title>
        <authorList>
            <person name="Stapleton M."/>
            <person name="Carlson J.W."/>
            <person name="Brokstein P."/>
            <person name="Yu C."/>
            <person name="Champe M."/>
            <person name="George R.A."/>
            <person name="Guarin H."/>
            <person name="Kronmiller B."/>
            <person name="Pacleb J.M."/>
            <person name="Park S."/>
            <person name="Wan K.H."/>
            <person name="Rubin G.M."/>
            <person name="Celniker S.E."/>
        </authorList>
    </citation>
    <scope>NUCLEOTIDE SEQUENCE [LARGE SCALE MRNA] (ISOFORM A)</scope>
    <source>
        <strain>Berkeley</strain>
        <tissue>Embryo</tissue>
    </source>
</reference>
<reference key="4">
    <citation type="submission" date="2006-12" db="EMBL/GenBank/DDBJ databases">
        <authorList>
            <person name="Stapleton M."/>
            <person name="Carlson J.W."/>
            <person name="Frise E."/>
            <person name="Kapadia B."/>
            <person name="Park S."/>
            <person name="Wan K.H."/>
            <person name="Yu C."/>
            <person name="Celniker S.E."/>
        </authorList>
    </citation>
    <scope>NUCLEOTIDE SEQUENCE [LARGE SCALE MRNA] (ISOFORM F)</scope>
    <source>
        <strain>Berkeley</strain>
    </source>
</reference>
<reference key="5">
    <citation type="journal article" date="2006" name="Glycobiology">
        <title>Expression of the UDP-GalNAc: polypeptide N-acetylgalactosaminyltransferase family is spatially and temporally regulated during Drosophila development.</title>
        <authorList>
            <person name="Tian E."/>
            <person name="Ten Hagen K.G."/>
        </authorList>
    </citation>
    <scope>DEVELOPMENTAL STAGE</scope>
</reference>
<reference key="6">
    <citation type="journal article" date="2012" name="J. Biol. Chem.">
        <title>Multiple members of the UDP-GalNAc: polypeptide N-acetylgalactosaminyltransferase family are essential for viability in Drosophila.</title>
        <authorList>
            <person name="Tran D.T."/>
            <person name="Zhang L."/>
            <person name="Zhang Y."/>
            <person name="Tian E."/>
            <person name="Earl L.A."/>
            <person name="Ten Hagen K.G."/>
        </authorList>
    </citation>
    <scope>DISRUPTION PHENOTYPE</scope>
</reference>
<reference evidence="12 13" key="7">
    <citation type="journal article" date="2018" name="Nat. Commun.">
        <title>A molecular switch orchestrates enzyme specificity and secretory granule morphology.</title>
        <authorList>
            <person name="Ji S."/>
            <person name="Samara N.L."/>
            <person name="Revoredo L."/>
            <person name="Zhang L."/>
            <person name="Tran D.T."/>
            <person name="Muirhead K."/>
            <person name="Tabak L.A."/>
            <person name="Ten Hagen K.G."/>
        </authorList>
    </citation>
    <scope>X-RAY CRYSTALLOGRAPHY (2.06 ANGSTROMS) OF 146-650 IN COMPLEX WITH SUBSTRATE AND MAGNESIUM</scope>
    <scope>FUNCTION (ISOFORMS A AND B)</scope>
    <scope>CATALYTIC ACTIVITY</scope>
    <scope>PATHWAY</scope>
    <scope>SUBUNIT</scope>
    <scope>SUBCELLULAR LOCATION (ISOFORMS A AND B)</scope>
    <scope>DEVELOPMENTAL STAGE (ISOFORMS A AND B)</scope>
    <scope>DOMAIN</scope>
    <scope>DISRUPTION PHENOTYPE</scope>
    <scope>GLYCOSYLATION AT ASN-321</scope>
    <scope>MUTAGENESIS OF 254-PRO--LEU-650</scope>
</reference>
<sequence length="650" mass="73193">MAFIWRRRSTTIVKLVAFALAIWFCIAFLVYTDDTRRRAAQEGAGASGAGSAPGVGGGAGGLGDPIALALRNEPAGEDFGINGNVIGGGGQKQAHDEADIPPTVGKHKADLQAERMRKKAAEQPKKKPQEDSKKVIDPPANFEENPGELGKPVRLPKEMSDEMKKAVDDGWTKNAFNQYVSDLISVHRTLPDPRDAWCKDEARYLTNLPKTDVIICFHNEAWTVLLRTVHSVLDRSPEHLIGKIILVDDYSDMPHLKRQLEDYFAAYPKVQIIRGQKREGLIRARILGANHAKSPVLTYLDSHCECTEGWLEPLLDRIARNSTTVVCPVIDVISDETLEYHYRDSGGVNVGGFDWNLQFSWHPVPERERKRHNSTAEPVYSPTMAGGLFSIDREFFDRLGTYDSGFDIWGGENLELSFKTWMCGGTLEIVPCSHVGHIFRKRSPYKWRSGVNVLKKNSVRLAEVWMDEYSQYYYHRIGNDKGDWGDVSDRRKLRNDLKCKSFKWYLDNIYPELFIPGDSVAHGEIRNLGYGGRTCLDAPAGKKHQKKAVGTYPCHRQGGNQYWMLSKAGEIRRDDSCLDYAGKDVTLFGCHGGKGNQFWTYRENTKQLHHGTSGKCLAISESKDKLLMEECSASLSRQQWTLENYDSSKL</sequence>
<proteinExistence type="evidence at protein level"/>
<accession>Q8MRC9</accession>
<accession>A1A6R7</accession>
<accession>A1A6V9</accession>
<accession>A8DYG1</accession>
<accession>A8DYG2</accession>
<accession>A8DYG3</accession>
<accession>Q0E950</accession>
<accession>Q9V7T0</accession>
<keyword id="KW-0002">3D-structure</keyword>
<keyword id="KW-0025">Alternative splicing</keyword>
<keyword id="KW-1015">Disulfide bond</keyword>
<keyword id="KW-0325">Glycoprotein</keyword>
<keyword id="KW-0328">Glycosyltransferase</keyword>
<keyword id="KW-0333">Golgi apparatus</keyword>
<keyword id="KW-0430">Lectin</keyword>
<keyword id="KW-0464">Manganese</keyword>
<keyword id="KW-0472">Membrane</keyword>
<keyword id="KW-0479">Metal-binding</keyword>
<keyword id="KW-1185">Reference proteome</keyword>
<keyword id="KW-0735">Signal-anchor</keyword>
<keyword id="KW-0808">Transferase</keyword>
<keyword id="KW-0812">Transmembrane</keyword>
<keyword id="KW-1133">Transmembrane helix</keyword>
<dbReference type="EC" id="2.4.1.41" evidence="6"/>
<dbReference type="EMBL" id="AE013599">
    <property type="protein sequence ID" value="AAF57964.3"/>
    <property type="molecule type" value="Genomic_DNA"/>
</dbReference>
<dbReference type="EMBL" id="AE013599">
    <property type="protein sequence ID" value="AAF57966.2"/>
    <property type="molecule type" value="Genomic_DNA"/>
</dbReference>
<dbReference type="EMBL" id="AE013599">
    <property type="protein sequence ID" value="ABV53822.1"/>
    <property type="molecule type" value="Genomic_DNA"/>
</dbReference>
<dbReference type="EMBL" id="AE013599">
    <property type="protein sequence ID" value="ABV53823.1"/>
    <property type="molecule type" value="Genomic_DNA"/>
</dbReference>
<dbReference type="EMBL" id="AE013599">
    <property type="protein sequence ID" value="ABV53824.1"/>
    <property type="molecule type" value="Genomic_DNA"/>
</dbReference>
<dbReference type="EMBL" id="AY121661">
    <property type="protein sequence ID" value="AAM51988.1"/>
    <property type="molecule type" value="mRNA"/>
</dbReference>
<dbReference type="EMBL" id="BT029588">
    <property type="protein sequence ID" value="ABL75647.1"/>
    <property type="status" value="ALT_SEQ"/>
    <property type="molecule type" value="mRNA"/>
</dbReference>
<dbReference type="EMBL" id="BT029630">
    <property type="protein sequence ID" value="ABL75689.1"/>
    <property type="status" value="ALT_SEQ"/>
    <property type="molecule type" value="mRNA"/>
</dbReference>
<dbReference type="RefSeq" id="NP_001097341.1">
    <molecule id="Q8MRC9-2"/>
    <property type="nucleotide sequence ID" value="NM_001103871.1"/>
</dbReference>
<dbReference type="RefSeq" id="NP_001097342.1">
    <molecule id="Q8MRC9-1"/>
    <property type="nucleotide sequence ID" value="NM_001103872.1"/>
</dbReference>
<dbReference type="RefSeq" id="NP_001097343.1">
    <molecule id="Q8MRC9-3"/>
    <property type="nucleotide sequence ID" value="NM_001103873.1"/>
</dbReference>
<dbReference type="RefSeq" id="NP_725602.1">
    <molecule id="Q8MRC9-1"/>
    <property type="nucleotide sequence ID" value="NM_166188.2"/>
</dbReference>
<dbReference type="RefSeq" id="NP_725603.2">
    <molecule id="Q8MRC9-2"/>
    <property type="nucleotide sequence ID" value="NM_166189.2"/>
</dbReference>
<dbReference type="PDB" id="6E4Q">
    <property type="method" value="X-ray"/>
    <property type="resolution" value="2.80 A"/>
    <property type="chains" value="A/B/C/D=146-650"/>
</dbReference>
<dbReference type="PDB" id="6E4R">
    <property type="method" value="X-ray"/>
    <property type="resolution" value="2.06 A"/>
    <property type="chains" value="A/B=146-650"/>
</dbReference>
<dbReference type="PDBsum" id="6E4Q"/>
<dbReference type="PDBsum" id="6E4R"/>
<dbReference type="SMR" id="Q8MRC9"/>
<dbReference type="BioGRID" id="73174">
    <property type="interactions" value="2"/>
</dbReference>
<dbReference type="FunCoup" id="Q8MRC9">
    <property type="interactions" value="383"/>
</dbReference>
<dbReference type="IntAct" id="Q8MRC9">
    <property type="interactions" value="2"/>
</dbReference>
<dbReference type="STRING" id="7227.FBpp0086258"/>
<dbReference type="CAZy" id="CBM13">
    <property type="family name" value="Carbohydrate-Binding Module Family 13"/>
</dbReference>
<dbReference type="CAZy" id="GT27">
    <property type="family name" value="Glycosyltransferase Family 27"/>
</dbReference>
<dbReference type="UniLectin" id="Q8MRC9"/>
<dbReference type="GlyCosmos" id="Q8MRC9">
    <property type="glycosylation" value="2 sites, No reported glycans"/>
</dbReference>
<dbReference type="GlyGen" id="Q8MRC9">
    <property type="glycosylation" value="3 sites"/>
</dbReference>
<dbReference type="iPTMnet" id="Q8MRC9"/>
<dbReference type="PaxDb" id="7227-FBpp0086258"/>
<dbReference type="EnsemblMetazoa" id="FBtr0087112">
    <molecule id="Q8MRC9-1"/>
    <property type="protein sequence ID" value="FBpp0086258"/>
    <property type="gene ID" value="FBgn0050463"/>
</dbReference>
<dbReference type="EnsemblMetazoa" id="FBtr0087113">
    <molecule id="Q8MRC9-2"/>
    <property type="protein sequence ID" value="FBpp0086259"/>
    <property type="gene ID" value="FBgn0050463"/>
</dbReference>
<dbReference type="EnsemblMetazoa" id="FBtr0113379">
    <molecule id="Q8MRC9-2"/>
    <property type="protein sequence ID" value="FBpp0112291"/>
    <property type="gene ID" value="FBgn0050463"/>
</dbReference>
<dbReference type="EnsemblMetazoa" id="FBtr0113380">
    <molecule id="Q8MRC9-1"/>
    <property type="protein sequence ID" value="FBpp0112292"/>
    <property type="gene ID" value="FBgn0050463"/>
</dbReference>
<dbReference type="EnsemblMetazoa" id="FBtr0113381">
    <molecule id="Q8MRC9-3"/>
    <property type="protein sequence ID" value="FBpp0112293"/>
    <property type="gene ID" value="FBgn0050463"/>
</dbReference>
<dbReference type="GeneID" id="246627"/>
<dbReference type="KEGG" id="dme:Dmel_CG30463"/>
<dbReference type="UCSC" id="CG30463-RA">
    <molecule id="Q8MRC9-1"/>
    <property type="organism name" value="d. melanogaster"/>
</dbReference>
<dbReference type="UCSC" id="CG30463-RC">
    <property type="organism name" value="d. melanogaster"/>
</dbReference>
<dbReference type="UCSC" id="CG30463-RD">
    <property type="organism name" value="d. melanogaster"/>
</dbReference>
<dbReference type="UCSC" id="CG30463-RE">
    <property type="organism name" value="d. melanogaster"/>
</dbReference>
<dbReference type="AGR" id="FB:FBgn0050463"/>
<dbReference type="CTD" id="246627"/>
<dbReference type="FlyBase" id="FBgn0050463">
    <property type="gene designation" value="Pgant9"/>
</dbReference>
<dbReference type="VEuPathDB" id="VectorBase:FBgn0050463"/>
<dbReference type="eggNOG" id="KOG3736">
    <property type="taxonomic scope" value="Eukaryota"/>
</dbReference>
<dbReference type="GeneTree" id="ENSGT00940000170662"/>
<dbReference type="HOGENOM" id="CLU_013477_0_1_1"/>
<dbReference type="InParanoid" id="Q8MRC9"/>
<dbReference type="OMA" id="DWNNFEF"/>
<dbReference type="OrthoDB" id="6119243at2759"/>
<dbReference type="PhylomeDB" id="Q8MRC9"/>
<dbReference type="UniPathway" id="UPA00378"/>
<dbReference type="BioGRID-ORCS" id="246627">
    <property type="hits" value="0 hits in 3 CRISPR screens"/>
</dbReference>
<dbReference type="GenomeRNAi" id="246627"/>
<dbReference type="PRO" id="PR:Q8MRC9"/>
<dbReference type="Proteomes" id="UP000000803">
    <property type="component" value="Chromosome 2R"/>
</dbReference>
<dbReference type="Bgee" id="FBgn0050463">
    <property type="expression patterns" value="Expressed in dorsal appendage forming follicle cell in ovary and 269 other cell types or tissues"/>
</dbReference>
<dbReference type="GO" id="GO:0005794">
    <property type="term" value="C:Golgi apparatus"/>
    <property type="evidence" value="ECO:0000250"/>
    <property type="project" value="FlyBase"/>
</dbReference>
<dbReference type="GO" id="GO:0031985">
    <property type="term" value="C:Golgi cisterna"/>
    <property type="evidence" value="ECO:0000314"/>
    <property type="project" value="FlyBase"/>
</dbReference>
<dbReference type="GO" id="GO:0000139">
    <property type="term" value="C:Golgi membrane"/>
    <property type="evidence" value="ECO:0000314"/>
    <property type="project" value="FlyBase"/>
</dbReference>
<dbReference type="GO" id="GO:0016020">
    <property type="term" value="C:membrane"/>
    <property type="evidence" value="ECO:0000255"/>
    <property type="project" value="FlyBase"/>
</dbReference>
<dbReference type="GO" id="GO:0030246">
    <property type="term" value="F:carbohydrate binding"/>
    <property type="evidence" value="ECO:0007669"/>
    <property type="project" value="UniProtKB-KW"/>
</dbReference>
<dbReference type="GO" id="GO:0046872">
    <property type="term" value="F:metal ion binding"/>
    <property type="evidence" value="ECO:0007669"/>
    <property type="project" value="UniProtKB-KW"/>
</dbReference>
<dbReference type="GO" id="GO:0004653">
    <property type="term" value="F:polypeptide N-acetylgalactosaminyltransferase activity"/>
    <property type="evidence" value="ECO:0000314"/>
    <property type="project" value="FlyBase"/>
</dbReference>
<dbReference type="GO" id="GO:0006493">
    <property type="term" value="P:protein O-linked glycosylation"/>
    <property type="evidence" value="ECO:0000314"/>
    <property type="project" value="FlyBase"/>
</dbReference>
<dbReference type="GO" id="GO:0019953">
    <property type="term" value="P:sexual reproduction"/>
    <property type="evidence" value="ECO:0000270"/>
    <property type="project" value="FlyBase"/>
</dbReference>
<dbReference type="CDD" id="cd23462">
    <property type="entry name" value="beta-trefoil_Ricin_Pgant9-like"/>
    <property type="match status" value="1"/>
</dbReference>
<dbReference type="CDD" id="cd02510">
    <property type="entry name" value="pp-GalNAc-T"/>
    <property type="match status" value="1"/>
</dbReference>
<dbReference type="FunFam" id="2.80.10.50:FF:000047">
    <property type="entry name" value="Polypeptide N-acetylgalactosaminyltransferase"/>
    <property type="match status" value="1"/>
</dbReference>
<dbReference type="FunFam" id="3.90.550.10:FF:000021">
    <property type="entry name" value="Polypeptide N-acetylgalactosaminyltransferase"/>
    <property type="match status" value="1"/>
</dbReference>
<dbReference type="Gene3D" id="2.80.10.50">
    <property type="match status" value="1"/>
</dbReference>
<dbReference type="Gene3D" id="3.90.550.10">
    <property type="entry name" value="Spore Coat Polysaccharide Biosynthesis Protein SpsA, Chain A"/>
    <property type="match status" value="1"/>
</dbReference>
<dbReference type="InterPro" id="IPR045885">
    <property type="entry name" value="GalNAc-T"/>
</dbReference>
<dbReference type="InterPro" id="IPR001173">
    <property type="entry name" value="Glyco_trans_2-like"/>
</dbReference>
<dbReference type="InterPro" id="IPR029044">
    <property type="entry name" value="Nucleotide-diphossugar_trans"/>
</dbReference>
<dbReference type="InterPro" id="IPR035992">
    <property type="entry name" value="Ricin_B-like_lectins"/>
</dbReference>
<dbReference type="InterPro" id="IPR000772">
    <property type="entry name" value="Ricin_B_lectin"/>
</dbReference>
<dbReference type="PANTHER" id="PTHR11675">
    <property type="entry name" value="N-ACETYLGALACTOSAMINYLTRANSFERASE"/>
    <property type="match status" value="1"/>
</dbReference>
<dbReference type="PANTHER" id="PTHR11675:SF131">
    <property type="entry name" value="POLYPEPTIDE N-ACETYLGALACTOSAMINYLTRANSFERASE 9-RELATED"/>
    <property type="match status" value="1"/>
</dbReference>
<dbReference type="Pfam" id="PF00535">
    <property type="entry name" value="Glycos_transf_2"/>
    <property type="match status" value="1"/>
</dbReference>
<dbReference type="Pfam" id="PF00652">
    <property type="entry name" value="Ricin_B_lectin"/>
    <property type="match status" value="1"/>
</dbReference>
<dbReference type="SMART" id="SM00458">
    <property type="entry name" value="RICIN"/>
    <property type="match status" value="1"/>
</dbReference>
<dbReference type="SUPFAM" id="SSF53448">
    <property type="entry name" value="Nucleotide-diphospho-sugar transferases"/>
    <property type="match status" value="1"/>
</dbReference>
<dbReference type="SUPFAM" id="SSF50370">
    <property type="entry name" value="Ricin B-like lectins"/>
    <property type="match status" value="1"/>
</dbReference>
<dbReference type="PROSITE" id="PS50231">
    <property type="entry name" value="RICIN_B_LECTIN"/>
    <property type="match status" value="1"/>
</dbReference>
<comment type="function">
    <text evidence="6">Catalyzes the initial reaction in O-linked oligosaccharide biosynthesis, the transfer of an N-acetyl-D-galactosamine residue to a serine or threonine residue on the protein receptor (PubMed:30158631). It can both act as a peptide transferase that transfers GalNAc onto unmodified peptide substrates, and as a glycopeptide transferase that requires the prior addition of a GalNAc on a peptide before adding additional GalNAc moieties (PubMed:30158631).</text>
</comment>
<comment type="function">
    <molecule>Isoform A</molecule>
    <text evidence="6">N-acetylgalactosaminyltransferase which preferentially O-glycosylates negatively charge substrates. O-glycosylates mucin-like protein Sgs3 in the salivary gland but to a lesser extent than isoform B. By regulating the O-glycosylation of secretory cargo proteins plays a role in the morphology and maturation of salivary gland secretory granules.</text>
</comment>
<comment type="function">
    <molecule>Isoform B</molecule>
    <text evidence="6">N-acetylgalactosaminyltransferase which preferentially O-glycosylates positively charge substrates. O-glycosylates mucin-like protein Sgs3 in the salivary gland. By regulating the O-glycosylation of secretory cargo proteins, plays a role in the morphology and maturation of salivary gland secretory granules.</text>
</comment>
<comment type="catalytic activity">
    <reaction evidence="6">
        <text>L-seryl-[protein] + UDP-N-acetyl-alpha-D-galactosamine = a 3-O-[N-acetyl-alpha-D-galactosaminyl]-L-seryl-[protein] + UDP + H(+)</text>
        <dbReference type="Rhea" id="RHEA:23956"/>
        <dbReference type="Rhea" id="RHEA-COMP:9863"/>
        <dbReference type="Rhea" id="RHEA-COMP:12788"/>
        <dbReference type="ChEBI" id="CHEBI:15378"/>
        <dbReference type="ChEBI" id="CHEBI:29999"/>
        <dbReference type="ChEBI" id="CHEBI:53604"/>
        <dbReference type="ChEBI" id="CHEBI:58223"/>
        <dbReference type="ChEBI" id="CHEBI:67138"/>
        <dbReference type="EC" id="2.4.1.41"/>
    </reaction>
</comment>
<comment type="catalytic activity">
    <reaction evidence="6">
        <text>L-threonyl-[protein] + UDP-N-acetyl-alpha-D-galactosamine = a 3-O-[N-acetyl-alpha-D-galactosaminyl]-L-threonyl-[protein] + UDP + H(+)</text>
        <dbReference type="Rhea" id="RHEA:52424"/>
        <dbReference type="Rhea" id="RHEA-COMP:11060"/>
        <dbReference type="Rhea" id="RHEA-COMP:11689"/>
        <dbReference type="ChEBI" id="CHEBI:15378"/>
        <dbReference type="ChEBI" id="CHEBI:30013"/>
        <dbReference type="ChEBI" id="CHEBI:58223"/>
        <dbReference type="ChEBI" id="CHEBI:67138"/>
        <dbReference type="ChEBI" id="CHEBI:87075"/>
        <dbReference type="EC" id="2.4.1.41"/>
    </reaction>
</comment>
<comment type="cofactor">
    <cofactor evidence="6">
        <name>Mn(2+)</name>
        <dbReference type="ChEBI" id="CHEBI:29035"/>
    </cofactor>
</comment>
<comment type="pathway">
    <text evidence="9">Protein modification; protein glycosylation.</text>
</comment>
<comment type="subunit">
    <text evidence="6">Isoform A forms homotetramer. Isoform B forms homodimer.</text>
</comment>
<comment type="subcellular location">
    <molecule>Isoform A</molecule>
    <subcellularLocation>
        <location evidence="6">Golgi apparatus membrane</location>
        <topology evidence="6">Single-pass type II membrane protein</topology>
    </subcellularLocation>
</comment>
<comment type="subcellular location">
    <molecule>Isoform B</molecule>
    <subcellularLocation>
        <location evidence="6">Golgi apparatus membrane</location>
        <topology evidence="6">Single-pass type II membrane protein</topology>
    </subcellularLocation>
</comment>
<comment type="alternative products">
    <event type="alternative splicing"/>
    <isoform>
        <id>Q8MRC9-1</id>
        <name>A</name>
        <name>D</name>
        <sequence type="displayed"/>
    </isoform>
    <isoform>
        <id>Q8MRC9-2</id>
        <name>B</name>
        <name>C</name>
        <sequence type="described" ref="VSP_034635"/>
    </isoform>
    <isoform>
        <id>Q8MRC9-3</id>
        <name>E</name>
        <sequence type="described" ref="VSP_034632 VSP_034635"/>
    </isoform>
    <isoform>
        <id>Q8MRC9-4</id>
        <name>F</name>
        <sequence type="described" ref="VSP_034633 VSP_034634 VSP_034635"/>
    </isoform>
</comment>
<comment type="developmental stage">
    <text evidence="4 6">Expressed both maternally and zygotically (PubMed:16251381). Expressed through embryonic and larval stages (PubMed:16251381). During embryonic stages 9-11, expressed in the developing anterior midgut and amnioserosa (PubMed:16251381). Expressed in the salivary glands from embryonic stage 12 onwards (PubMed:16251381). During embryonic stages 12-13, still expressed in the amnioserosa region (PubMed:16251381). In third instar larvae, expressed ubiquitously in wing, with increased expression in the notum and ventral wing pouch, leg and haltere imaginal disks (PubMed:16251381). In eye-antennal imaginal disk, expressed in the presumptive eye region only (PubMed:16251381). Isoform A: Expressed in trachea, midgut, salivary gland, hindgut, central nervous system and Malpighian tubules (PubMed:30158631). Isoform B: Specifically expressed in the salivary gland (PubMed:30158631).</text>
</comment>
<comment type="domain">
    <text evidence="6">There are two conserved domains in the glycosyltransferase region: the N-terminal domain (domain A, also called GT1 motif), which is involved in manganese coordination and substrate binding and the C-terminal domain (domain B, also called Gal/GalNAc-T motif), which is involved in catalytic reaction and UDP-Gal binding.</text>
</comment>
<comment type="domain">
    <text evidence="6">The alpha subunit loop in the ricin B-type lectin domain regulates substrate specificity and modulates the substrate access to the active site. In isoform A, the alpha subunit loop is composed of positively charged residues and acts on negatively charged substrates. In isoform B, the alpha subunit loop is composed of negatively charged residues and acts on positively charged substrates.</text>
</comment>
<comment type="disruption phenotype">
    <text evidence="5 6">RNAi-mediated knockdown in the whole body, in the mesoderm, the respiratory system or the amnioserosa results in lethality (PubMed:22157008). RNAi-mediated knockdown in the epidermis or the digestive system and reproductive tract results in a reduction in viability (PubMed:22157008). RNAi-mediated knockdown in salivary glands results in aberrant secretory granule morphology showing angular, shard-like morphology (PubMed:30158631).</text>
</comment>
<comment type="similarity">
    <text evidence="8">Belongs to the glycosyltransferase 2 family. GalNAc-T subfamily.</text>
</comment>
<comment type="sequence caution" evidence="8">
    <conflict type="miscellaneous discrepancy">
        <sequence resource="EMBL-CDS" id="ABL75647"/>
    </conflict>
    <text>Intron retention.</text>
</comment>
<comment type="sequence caution" evidence="8">
    <conflict type="miscellaneous discrepancy">
        <sequence resource="EMBL-CDS" id="ABL75689"/>
    </conflict>
    <text>Intron retention.</text>
</comment>
<protein>
    <recommendedName>
        <fullName>Putative polypeptide N-acetylgalactosaminyltransferase 9</fullName>
        <shortName>pp-GaNTase 9</shortName>
        <ecNumber evidence="6">2.4.1.41</ecNumber>
    </recommendedName>
    <alternativeName>
        <fullName>Protein-UDP acetylgalactosaminyltransferase 9</fullName>
    </alternativeName>
    <alternativeName>
        <fullName>UDP-GalNAc:polypeptide N-acetylgalactosaminyltransferase 9</fullName>
    </alternativeName>
</protein>
<evidence type="ECO:0000255" key="1"/>
<evidence type="ECO:0000255" key="2">
    <source>
        <dbReference type="PROSITE-ProRule" id="PRU00174"/>
    </source>
</evidence>
<evidence type="ECO:0000256" key="3">
    <source>
        <dbReference type="SAM" id="MobiDB-lite"/>
    </source>
</evidence>
<evidence type="ECO:0000269" key="4">
    <source>
    </source>
</evidence>
<evidence type="ECO:0000269" key="5">
    <source>
    </source>
</evidence>
<evidence type="ECO:0000269" key="6">
    <source>
    </source>
</evidence>
<evidence type="ECO:0000303" key="7">
    <source ref="4"/>
</evidence>
<evidence type="ECO:0000305" key="8"/>
<evidence type="ECO:0000305" key="9">
    <source>
    </source>
</evidence>
<evidence type="ECO:0000312" key="10">
    <source>
        <dbReference type="FlyBase" id="FBgn0050463"/>
    </source>
</evidence>
<evidence type="ECO:0000312" key="11">
    <source>
        <dbReference type="PDB" id="6E4Q"/>
    </source>
</evidence>
<evidence type="ECO:0000312" key="12">
    <source>
        <dbReference type="PDB" id="6E4R"/>
    </source>
</evidence>
<evidence type="ECO:0007744" key="13">
    <source>
        <dbReference type="PDB" id="6E4Q"/>
    </source>
</evidence>
<evidence type="ECO:0007829" key="14">
    <source>
        <dbReference type="PDB" id="6E4Q"/>
    </source>
</evidence>
<evidence type="ECO:0007829" key="15">
    <source>
        <dbReference type="PDB" id="6E4R"/>
    </source>
</evidence>